<evidence type="ECO:0000255" key="1"/>
<evidence type="ECO:0000269" key="2">
    <source>
    </source>
</evidence>
<evidence type="ECO:0000269" key="3">
    <source>
    </source>
</evidence>
<evidence type="ECO:0000269" key="4">
    <source>
    </source>
</evidence>
<evidence type="ECO:0000305" key="5"/>
<gene>
    <name type="primary">GIM4</name>
    <name type="synonym">PFD2</name>
    <name type="ordered locus">YEL003W</name>
</gene>
<reference key="1">
    <citation type="journal article" date="1997" name="Nature">
        <title>The nucleotide sequence of Saccharomyces cerevisiae chromosome V.</title>
        <authorList>
            <person name="Dietrich F.S."/>
            <person name="Mulligan J.T."/>
            <person name="Hennessy K.M."/>
            <person name="Yelton M.A."/>
            <person name="Allen E."/>
            <person name="Araujo R."/>
            <person name="Aviles E."/>
            <person name="Berno A."/>
            <person name="Brennan T."/>
            <person name="Carpenter J."/>
            <person name="Chen E."/>
            <person name="Cherry J.M."/>
            <person name="Chung E."/>
            <person name="Duncan M."/>
            <person name="Guzman E."/>
            <person name="Hartzell G."/>
            <person name="Hunicke-Smith S."/>
            <person name="Hyman R.W."/>
            <person name="Kayser A."/>
            <person name="Komp C."/>
            <person name="Lashkari D."/>
            <person name="Lew H."/>
            <person name="Lin D."/>
            <person name="Mosedale D."/>
            <person name="Nakahara K."/>
            <person name="Namath A."/>
            <person name="Norgren R."/>
            <person name="Oefner P."/>
            <person name="Oh C."/>
            <person name="Petel F.X."/>
            <person name="Roberts D."/>
            <person name="Sehl P."/>
            <person name="Schramm S."/>
            <person name="Shogren T."/>
            <person name="Smith V."/>
            <person name="Taylor P."/>
            <person name="Wei Y."/>
            <person name="Botstein D."/>
            <person name="Davis R.W."/>
        </authorList>
    </citation>
    <scope>NUCLEOTIDE SEQUENCE [LARGE SCALE GENOMIC DNA]</scope>
    <source>
        <strain>ATCC 204508 / S288c</strain>
    </source>
</reference>
<reference key="2">
    <citation type="journal article" date="2014" name="G3 (Bethesda)">
        <title>The reference genome sequence of Saccharomyces cerevisiae: Then and now.</title>
        <authorList>
            <person name="Engel S.R."/>
            <person name="Dietrich F.S."/>
            <person name="Fisk D.G."/>
            <person name="Binkley G."/>
            <person name="Balakrishnan R."/>
            <person name="Costanzo M.C."/>
            <person name="Dwight S.S."/>
            <person name="Hitz B.C."/>
            <person name="Karra K."/>
            <person name="Nash R.S."/>
            <person name="Weng S."/>
            <person name="Wong E.D."/>
            <person name="Lloyd P."/>
            <person name="Skrzypek M.S."/>
            <person name="Miyasato S.R."/>
            <person name="Simison M."/>
            <person name="Cherry J.M."/>
        </authorList>
    </citation>
    <scope>GENOME REANNOTATION</scope>
    <source>
        <strain>ATCC 204508 / S288c</strain>
    </source>
</reference>
<reference key="3">
    <citation type="journal article" date="2007" name="Proc. Natl. Acad. Sci. U.S.A.">
        <title>High-density yeast-tiling array reveals previously undiscovered introns and extensive regulation of meiotic splicing.</title>
        <authorList>
            <person name="Juneau K."/>
            <person name="Palm C."/>
            <person name="Miranda M."/>
            <person name="Davis R.W."/>
        </authorList>
    </citation>
    <scope>NUCLEOTIDE SEQUENCE [MRNA] OF 1-59</scope>
    <source>
        <strain>ATCC 201390 / BY4743</strain>
    </source>
</reference>
<reference key="4">
    <citation type="journal article" date="2007" name="Genome Res.">
        <title>Approaching a complete repository of sequence-verified protein-encoding clones for Saccharomyces cerevisiae.</title>
        <authorList>
            <person name="Hu Y."/>
            <person name="Rolfs A."/>
            <person name="Bhullar B."/>
            <person name="Murthy T.V.S."/>
            <person name="Zhu C."/>
            <person name="Berger M.F."/>
            <person name="Camargo A.A."/>
            <person name="Kelley F."/>
            <person name="McCarron S."/>
            <person name="Jepson D."/>
            <person name="Richardson A."/>
            <person name="Raphael J."/>
            <person name="Moreira D."/>
            <person name="Taycher E."/>
            <person name="Zuo D."/>
            <person name="Mohr S."/>
            <person name="Kane M.F."/>
            <person name="Williamson J."/>
            <person name="Simpson A.J.G."/>
            <person name="Bulyk M.L."/>
            <person name="Harlow E."/>
            <person name="Marsischky G."/>
            <person name="Kolodner R.D."/>
            <person name="LaBaer J."/>
        </authorList>
    </citation>
    <scope>NUCLEOTIDE SEQUENCE [GENOMIC DNA] OF 7-111</scope>
    <source>
        <strain>ATCC 204508 / S288c</strain>
    </source>
</reference>
<reference key="5">
    <citation type="journal article" date="1998" name="EMBO J.">
        <title>A novel protein complex promoting formation of functional alpha- and gamma-tubulin.</title>
        <authorList>
            <person name="Geissler S."/>
            <person name="Siegers K."/>
            <person name="Schiebel E."/>
        </authorList>
    </citation>
    <scope>CHARACTERIZATION</scope>
</reference>
<reference key="6">
    <citation type="journal article" date="1999" name="EMBO J.">
        <title>Compartmentation of protein folding in vivo: sequestration of non-native polypeptide by the chaperonin-GimC system.</title>
        <authorList>
            <person name="Siegers K."/>
            <person name="Waldmann T."/>
            <person name="Leroux M.R."/>
            <person name="Grein K."/>
            <person name="Shevchenko A."/>
            <person name="Schiebel E."/>
            <person name="Hartl F.U."/>
        </authorList>
    </citation>
    <scope>IDENTIFICATION IN THE PREFOLDIN COMPLEX</scope>
</reference>
<reference key="7">
    <citation type="journal article" date="2003" name="Nature">
        <title>Global analysis of protein localization in budding yeast.</title>
        <authorList>
            <person name="Huh W.-K."/>
            <person name="Falvo J.V."/>
            <person name="Gerke L.C."/>
            <person name="Carroll A.S."/>
            <person name="Howson R.W."/>
            <person name="Weissman J.S."/>
            <person name="O'Shea E.K."/>
        </authorList>
    </citation>
    <scope>SUBCELLULAR LOCATION [LARGE SCALE ANALYSIS]</scope>
</reference>
<reference key="8">
    <citation type="journal article" date="2003" name="Nature">
        <title>Global analysis of protein expression in yeast.</title>
        <authorList>
            <person name="Ghaemmaghami S."/>
            <person name="Huh W.-K."/>
            <person name="Bower K."/>
            <person name="Howson R.W."/>
            <person name="Belle A."/>
            <person name="Dephoure N."/>
            <person name="O'Shea E.K."/>
            <person name="Weissman J.S."/>
        </authorList>
    </citation>
    <scope>LEVEL OF PROTEIN EXPRESSION [LARGE SCALE ANALYSIS]</scope>
</reference>
<reference key="9">
    <citation type="journal article" date="2006" name="Proc. Natl. Acad. Sci. U.S.A.">
        <title>A large-scale full-length cDNA analysis to explore the budding yeast transcriptome.</title>
        <authorList>
            <person name="Miura F."/>
            <person name="Kawaguchi N."/>
            <person name="Sese J."/>
            <person name="Toyoda A."/>
            <person name="Hattori M."/>
            <person name="Morishita S."/>
            <person name="Ito T."/>
        </authorList>
    </citation>
    <scope>IDENTIFICATION OF INTRON</scope>
</reference>
<keyword id="KW-0143">Chaperone</keyword>
<keyword id="KW-0175">Coiled coil</keyword>
<keyword id="KW-0963">Cytoplasm</keyword>
<keyword id="KW-1185">Reference proteome</keyword>
<sequence length="111" mass="12994">MEQRNNVFQAKYNEYKQILEELQTKIIELGHDKDEHTIVIKTLKDAEPTRKCYRMIGGALVESDVQTSLPILETKKENIEGTISKMKETLIQTAKEFEKWKKDNKIQVVKN</sequence>
<protein>
    <recommendedName>
        <fullName>Prefoldin subunit 2</fullName>
    </recommendedName>
    <alternativeName>
        <fullName>Genes involved in microtubule biogenesis protein 4</fullName>
    </alternativeName>
    <alternativeName>
        <fullName>Gim complex subunit 4</fullName>
        <shortName>GimC subunit 4</shortName>
    </alternativeName>
</protein>
<dbReference type="EMBL" id="U18530">
    <property type="protein sequence ID" value="AAB64480.1"/>
    <property type="status" value="ALT_SEQ"/>
    <property type="molecule type" value="Genomic_DNA"/>
</dbReference>
<dbReference type="EMBL" id="EF123144">
    <property type="protein sequence ID" value="ABM97488.1"/>
    <property type="molecule type" value="mRNA"/>
</dbReference>
<dbReference type="EMBL" id="AY558339">
    <property type="protein sequence ID" value="AAS56665.1"/>
    <property type="status" value="ALT_SEQ"/>
    <property type="molecule type" value="Genomic_DNA"/>
</dbReference>
<dbReference type="EMBL" id="BK006939">
    <property type="protein sequence ID" value="DAA07648.1"/>
    <property type="molecule type" value="Genomic_DNA"/>
</dbReference>
<dbReference type="PIR" id="S50456">
    <property type="entry name" value="S50456"/>
</dbReference>
<dbReference type="RefSeq" id="NP_010913.2">
    <property type="nucleotide sequence ID" value="NM_001178818.1"/>
</dbReference>
<dbReference type="SMR" id="P40005"/>
<dbReference type="BioGRID" id="36728">
    <property type="interactions" value="599"/>
</dbReference>
<dbReference type="ComplexPortal" id="CPX-1671">
    <property type="entry name" value="Prefoldin co-chaperone complex"/>
</dbReference>
<dbReference type="DIP" id="DIP-7472N"/>
<dbReference type="FunCoup" id="P40005">
    <property type="interactions" value="892"/>
</dbReference>
<dbReference type="IntAct" id="P40005">
    <property type="interactions" value="5"/>
</dbReference>
<dbReference type="MINT" id="P40005"/>
<dbReference type="STRING" id="4932.YEL003W"/>
<dbReference type="iPTMnet" id="P40005"/>
<dbReference type="PaxDb" id="4932-YEL003W"/>
<dbReference type="PeptideAtlas" id="P40005"/>
<dbReference type="EnsemblFungi" id="YEL003W_mRNA">
    <property type="protein sequence ID" value="YEL003W"/>
    <property type="gene ID" value="YEL003W"/>
</dbReference>
<dbReference type="GeneID" id="856715"/>
<dbReference type="KEGG" id="sce:YEL003W"/>
<dbReference type="AGR" id="SGD:S000000729"/>
<dbReference type="SGD" id="S000000729">
    <property type="gene designation" value="GIM4"/>
</dbReference>
<dbReference type="VEuPathDB" id="FungiDB:YEL003W"/>
<dbReference type="eggNOG" id="KOG4098">
    <property type="taxonomic scope" value="Eukaryota"/>
</dbReference>
<dbReference type="GeneTree" id="ENSGT00390000009272"/>
<dbReference type="HOGENOM" id="CLU_113004_1_1_1"/>
<dbReference type="InParanoid" id="P40005"/>
<dbReference type="OMA" id="CFKMIGG"/>
<dbReference type="OrthoDB" id="29646at2759"/>
<dbReference type="BioCyc" id="YEAST:G3O-30132-MONOMER"/>
<dbReference type="BioGRID-ORCS" id="856715">
    <property type="hits" value="2 hits in 10 CRISPR screens"/>
</dbReference>
<dbReference type="PRO" id="PR:P40005"/>
<dbReference type="Proteomes" id="UP000002311">
    <property type="component" value="Chromosome V"/>
</dbReference>
<dbReference type="RNAct" id="P40005">
    <property type="molecule type" value="protein"/>
</dbReference>
<dbReference type="GO" id="GO:0005737">
    <property type="term" value="C:cytoplasm"/>
    <property type="evidence" value="ECO:0000314"/>
    <property type="project" value="SGD"/>
</dbReference>
<dbReference type="GO" id="GO:0016272">
    <property type="term" value="C:prefoldin complex"/>
    <property type="evidence" value="ECO:0000353"/>
    <property type="project" value="ComplexPortal"/>
</dbReference>
<dbReference type="GO" id="GO:0044183">
    <property type="term" value="F:protein folding chaperone"/>
    <property type="evidence" value="ECO:0000318"/>
    <property type="project" value="GO_Central"/>
</dbReference>
<dbReference type="GO" id="GO:0015631">
    <property type="term" value="F:tubulin binding"/>
    <property type="evidence" value="ECO:0000314"/>
    <property type="project" value="SGD"/>
</dbReference>
<dbReference type="GO" id="GO:0051082">
    <property type="term" value="F:unfolded protein binding"/>
    <property type="evidence" value="ECO:0007669"/>
    <property type="project" value="InterPro"/>
</dbReference>
<dbReference type="GO" id="GO:0006457">
    <property type="term" value="P:protein folding"/>
    <property type="evidence" value="ECO:0000318"/>
    <property type="project" value="GO_Central"/>
</dbReference>
<dbReference type="GO" id="GO:0007021">
    <property type="term" value="P:tubulin complex assembly"/>
    <property type="evidence" value="ECO:0000315"/>
    <property type="project" value="SGD"/>
</dbReference>
<dbReference type="CDD" id="cd23163">
    <property type="entry name" value="Prefoldin_2"/>
    <property type="match status" value="1"/>
</dbReference>
<dbReference type="FunFam" id="1.10.287.370:FF:000025">
    <property type="entry name" value="Prefoldin subunit 2"/>
    <property type="match status" value="1"/>
</dbReference>
<dbReference type="Gene3D" id="1.10.287.370">
    <property type="match status" value="1"/>
</dbReference>
<dbReference type="InterPro" id="IPR027235">
    <property type="entry name" value="PFD2"/>
</dbReference>
<dbReference type="InterPro" id="IPR002777">
    <property type="entry name" value="PFD_beta-like"/>
</dbReference>
<dbReference type="InterPro" id="IPR009053">
    <property type="entry name" value="Prefoldin"/>
</dbReference>
<dbReference type="PANTHER" id="PTHR13303">
    <property type="entry name" value="PREFOLDIN SUBUNIT 2"/>
    <property type="match status" value="1"/>
</dbReference>
<dbReference type="Pfam" id="PF01920">
    <property type="entry name" value="Prefoldin_2"/>
    <property type="match status" value="1"/>
</dbReference>
<dbReference type="SUPFAM" id="SSF46579">
    <property type="entry name" value="Prefoldin"/>
    <property type="match status" value="1"/>
</dbReference>
<comment type="function">
    <text>Binds specifically to cytosolic chaperonin (c-CPN) and transfers target proteins to it. Binds to nascent polypeptide chain and promotes folding in an environment in which there are many competing pathways for nonnative proteins.</text>
</comment>
<comment type="subunit">
    <text evidence="4">Heterohexamer of two PFD-alpha type and four PFD-beta type subunits.</text>
</comment>
<comment type="subcellular location">
    <subcellularLocation>
        <location evidence="2">Cytoplasm</location>
    </subcellularLocation>
</comment>
<comment type="miscellaneous">
    <text evidence="3">Present with 1660 molecules/cell in log phase SD medium.</text>
</comment>
<comment type="similarity">
    <text evidence="5">Belongs to the prefoldin subunit beta family.</text>
</comment>
<comment type="sequence caution" evidence="5">
    <conflict type="erroneous gene model prediction">
        <sequence resource="EMBL-CDS" id="AAB64480"/>
    </conflict>
</comment>
<comment type="sequence caution" evidence="5">
    <conflict type="erroneous gene model prediction">
        <sequence resource="EMBL-CDS" id="AAS56665"/>
    </conflict>
</comment>
<name>PFD2_YEAST</name>
<organism>
    <name type="scientific">Saccharomyces cerevisiae (strain ATCC 204508 / S288c)</name>
    <name type="common">Baker's yeast</name>
    <dbReference type="NCBI Taxonomy" id="559292"/>
    <lineage>
        <taxon>Eukaryota</taxon>
        <taxon>Fungi</taxon>
        <taxon>Dikarya</taxon>
        <taxon>Ascomycota</taxon>
        <taxon>Saccharomycotina</taxon>
        <taxon>Saccharomycetes</taxon>
        <taxon>Saccharomycetales</taxon>
        <taxon>Saccharomycetaceae</taxon>
        <taxon>Saccharomyces</taxon>
    </lineage>
</organism>
<feature type="chain" id="PRO_0000124841" description="Prefoldin subunit 2">
    <location>
        <begin position="1"/>
        <end position="111"/>
    </location>
</feature>
<feature type="coiled-coil region" evidence="1">
    <location>
        <begin position="1"/>
        <end position="36"/>
    </location>
</feature>
<feature type="coiled-coil region" evidence="1">
    <location>
        <begin position="72"/>
        <end position="92"/>
    </location>
</feature>
<feature type="sequence conflict" description="In Ref. 3; ABM97488." evidence="5" ref="3">
    <original>A</original>
    <variation>T</variation>
    <location>
        <position position="59"/>
    </location>
</feature>
<accession>P40005</accession>
<accession>A2TBP1</accession>
<accession>D3DLP4</accession>
<proteinExistence type="evidence at protein level"/>